<protein>
    <recommendedName>
        <fullName evidence="1">Adenosine deaminase</fullName>
        <ecNumber evidence="1">3.5.4.4</ecNumber>
    </recommendedName>
    <alternativeName>
        <fullName evidence="1">Adenosine aminohydrolase</fullName>
    </alternativeName>
</protein>
<keyword id="KW-0378">Hydrolase</keyword>
<keyword id="KW-0479">Metal-binding</keyword>
<keyword id="KW-0546">Nucleotide metabolism</keyword>
<keyword id="KW-0862">Zinc</keyword>
<reference key="1">
    <citation type="submission" date="2006-08" db="EMBL/GenBank/DDBJ databases">
        <title>Complete sequence of chromosome 1 of Shewanella sp. MR-7.</title>
        <authorList>
            <person name="Copeland A."/>
            <person name="Lucas S."/>
            <person name="Lapidus A."/>
            <person name="Barry K."/>
            <person name="Detter J.C."/>
            <person name="Glavina del Rio T."/>
            <person name="Hammon N."/>
            <person name="Israni S."/>
            <person name="Dalin E."/>
            <person name="Tice H."/>
            <person name="Pitluck S."/>
            <person name="Kiss H."/>
            <person name="Brettin T."/>
            <person name="Bruce D."/>
            <person name="Han C."/>
            <person name="Tapia R."/>
            <person name="Gilna P."/>
            <person name="Schmutz J."/>
            <person name="Larimer F."/>
            <person name="Land M."/>
            <person name="Hauser L."/>
            <person name="Kyrpides N."/>
            <person name="Mikhailova N."/>
            <person name="Nealson K."/>
            <person name="Konstantinidis K."/>
            <person name="Klappenbach J."/>
            <person name="Tiedje J."/>
            <person name="Richardson P."/>
        </authorList>
    </citation>
    <scope>NUCLEOTIDE SEQUENCE [LARGE SCALE GENOMIC DNA]</scope>
    <source>
        <strain>MR-7</strain>
    </source>
</reference>
<accession>Q0HPH4</accession>
<sequence length="331" mass="36123">MINTSIPLVDLHRHLDGNVRVNTIWELGHQHGIALPADSLETLAPFVQIQGKETSLVAFLKKLDWMVAVLADLDAVKRVAYENVADAALSGLDYAELRFSPYYMAMNHKLPIEGVVEAVIDGVKAGLKDYQVKINLIGIMSRSFGQAACAQELEGLLAHKQHLVAMDLAGDELGFPGELFNEHFKRVRDAGLAITAHAGEAAGSQSMWQAIQELGATRIGHGVNAIHDPKLMDYLAKHRIGIESCPTSNLHTSTVSSYAEHPFRTFMDAGVLISLNTDDPGVSAIDIKHEYRIAKSELGLSYAELAQVQRNGVEMAFLSESERKALYAAKA</sequence>
<gene>
    <name evidence="1" type="primary">add</name>
    <name type="ordered locus">Shewmr7_4004</name>
</gene>
<dbReference type="EC" id="3.5.4.4" evidence="1"/>
<dbReference type="EMBL" id="CP000444">
    <property type="protein sequence ID" value="ABI44981.1"/>
    <property type="molecule type" value="Genomic_DNA"/>
</dbReference>
<dbReference type="SMR" id="Q0HPH4"/>
<dbReference type="KEGG" id="shm:Shewmr7_4004"/>
<dbReference type="HOGENOM" id="CLU_039228_0_2_6"/>
<dbReference type="GO" id="GO:0005829">
    <property type="term" value="C:cytosol"/>
    <property type="evidence" value="ECO:0007669"/>
    <property type="project" value="TreeGrafter"/>
</dbReference>
<dbReference type="GO" id="GO:0046936">
    <property type="term" value="F:2'-deoxyadenosine deaminase activity"/>
    <property type="evidence" value="ECO:0007669"/>
    <property type="project" value="RHEA"/>
</dbReference>
<dbReference type="GO" id="GO:0004000">
    <property type="term" value="F:adenosine deaminase activity"/>
    <property type="evidence" value="ECO:0007669"/>
    <property type="project" value="UniProtKB-UniRule"/>
</dbReference>
<dbReference type="GO" id="GO:0008270">
    <property type="term" value="F:zinc ion binding"/>
    <property type="evidence" value="ECO:0007669"/>
    <property type="project" value="UniProtKB-UniRule"/>
</dbReference>
<dbReference type="GO" id="GO:0006154">
    <property type="term" value="P:adenosine catabolic process"/>
    <property type="evidence" value="ECO:0007669"/>
    <property type="project" value="TreeGrafter"/>
</dbReference>
<dbReference type="GO" id="GO:0043103">
    <property type="term" value="P:hypoxanthine salvage"/>
    <property type="evidence" value="ECO:0007669"/>
    <property type="project" value="TreeGrafter"/>
</dbReference>
<dbReference type="GO" id="GO:0046103">
    <property type="term" value="P:inosine biosynthetic process"/>
    <property type="evidence" value="ECO:0007669"/>
    <property type="project" value="TreeGrafter"/>
</dbReference>
<dbReference type="GO" id="GO:0009117">
    <property type="term" value="P:nucleotide metabolic process"/>
    <property type="evidence" value="ECO:0007669"/>
    <property type="project" value="UniProtKB-KW"/>
</dbReference>
<dbReference type="GO" id="GO:0009168">
    <property type="term" value="P:purine ribonucleoside monophosphate biosynthetic process"/>
    <property type="evidence" value="ECO:0007669"/>
    <property type="project" value="UniProtKB-UniRule"/>
</dbReference>
<dbReference type="FunFam" id="3.20.20.140:FF:000009">
    <property type="entry name" value="Adenosine deaminase"/>
    <property type="match status" value="1"/>
</dbReference>
<dbReference type="Gene3D" id="3.20.20.140">
    <property type="entry name" value="Metal-dependent hydrolases"/>
    <property type="match status" value="1"/>
</dbReference>
<dbReference type="HAMAP" id="MF_00540">
    <property type="entry name" value="A_deaminase"/>
    <property type="match status" value="1"/>
</dbReference>
<dbReference type="InterPro" id="IPR006650">
    <property type="entry name" value="A/AMP_deam_AS"/>
</dbReference>
<dbReference type="InterPro" id="IPR028893">
    <property type="entry name" value="A_deaminase"/>
</dbReference>
<dbReference type="InterPro" id="IPR001365">
    <property type="entry name" value="A_deaminase_dom"/>
</dbReference>
<dbReference type="InterPro" id="IPR006330">
    <property type="entry name" value="Ado/ade_deaminase"/>
</dbReference>
<dbReference type="InterPro" id="IPR032466">
    <property type="entry name" value="Metal_Hydrolase"/>
</dbReference>
<dbReference type="NCBIfam" id="TIGR01430">
    <property type="entry name" value="aden_deam"/>
    <property type="match status" value="1"/>
</dbReference>
<dbReference type="NCBIfam" id="NF006846">
    <property type="entry name" value="PRK09358.1-1"/>
    <property type="match status" value="1"/>
</dbReference>
<dbReference type="PANTHER" id="PTHR11409">
    <property type="entry name" value="ADENOSINE DEAMINASE"/>
    <property type="match status" value="1"/>
</dbReference>
<dbReference type="PANTHER" id="PTHR11409:SF43">
    <property type="entry name" value="ADENOSINE DEAMINASE"/>
    <property type="match status" value="1"/>
</dbReference>
<dbReference type="Pfam" id="PF00962">
    <property type="entry name" value="A_deaminase"/>
    <property type="match status" value="1"/>
</dbReference>
<dbReference type="SUPFAM" id="SSF51556">
    <property type="entry name" value="Metallo-dependent hydrolases"/>
    <property type="match status" value="1"/>
</dbReference>
<dbReference type="PROSITE" id="PS00485">
    <property type="entry name" value="A_DEAMINASE"/>
    <property type="match status" value="1"/>
</dbReference>
<evidence type="ECO:0000255" key="1">
    <source>
        <dbReference type="HAMAP-Rule" id="MF_00540"/>
    </source>
</evidence>
<comment type="function">
    <text evidence="1">Catalyzes the hydrolytic deamination of adenosine and 2-deoxyadenosine.</text>
</comment>
<comment type="catalytic activity">
    <reaction evidence="1">
        <text>adenosine + H2O + H(+) = inosine + NH4(+)</text>
        <dbReference type="Rhea" id="RHEA:24408"/>
        <dbReference type="ChEBI" id="CHEBI:15377"/>
        <dbReference type="ChEBI" id="CHEBI:15378"/>
        <dbReference type="ChEBI" id="CHEBI:16335"/>
        <dbReference type="ChEBI" id="CHEBI:17596"/>
        <dbReference type="ChEBI" id="CHEBI:28938"/>
        <dbReference type="EC" id="3.5.4.4"/>
    </reaction>
    <physiologicalReaction direction="left-to-right" evidence="1">
        <dbReference type="Rhea" id="RHEA:24409"/>
    </physiologicalReaction>
</comment>
<comment type="catalytic activity">
    <reaction evidence="1">
        <text>2'-deoxyadenosine + H2O + H(+) = 2'-deoxyinosine + NH4(+)</text>
        <dbReference type="Rhea" id="RHEA:28190"/>
        <dbReference type="ChEBI" id="CHEBI:15377"/>
        <dbReference type="ChEBI" id="CHEBI:15378"/>
        <dbReference type="ChEBI" id="CHEBI:17256"/>
        <dbReference type="ChEBI" id="CHEBI:28938"/>
        <dbReference type="ChEBI" id="CHEBI:28997"/>
        <dbReference type="EC" id="3.5.4.4"/>
    </reaction>
    <physiologicalReaction direction="left-to-right" evidence="1">
        <dbReference type="Rhea" id="RHEA:28191"/>
    </physiologicalReaction>
</comment>
<comment type="cofactor">
    <cofactor evidence="1">
        <name>Zn(2+)</name>
        <dbReference type="ChEBI" id="CHEBI:29105"/>
    </cofactor>
    <text evidence="1">Binds 1 zinc ion per subunit.</text>
</comment>
<comment type="similarity">
    <text evidence="1">Belongs to the metallo-dependent hydrolases superfamily. Adenosine and AMP deaminases family. Adenosine deaminase subfamily.</text>
</comment>
<proteinExistence type="inferred from homology"/>
<organism>
    <name type="scientific">Shewanella sp. (strain MR-7)</name>
    <dbReference type="NCBI Taxonomy" id="60481"/>
    <lineage>
        <taxon>Bacteria</taxon>
        <taxon>Pseudomonadati</taxon>
        <taxon>Pseudomonadota</taxon>
        <taxon>Gammaproteobacteria</taxon>
        <taxon>Alteromonadales</taxon>
        <taxon>Shewanellaceae</taxon>
        <taxon>Shewanella</taxon>
    </lineage>
</organism>
<name>ADD_SHESR</name>
<feature type="chain" id="PRO_1000017702" description="Adenosine deaminase">
    <location>
        <begin position="1"/>
        <end position="331"/>
    </location>
</feature>
<feature type="active site" description="Proton donor" evidence="1">
    <location>
        <position position="200"/>
    </location>
</feature>
<feature type="binding site" evidence="1">
    <location>
        <position position="12"/>
    </location>
    <ligand>
        <name>Zn(2+)</name>
        <dbReference type="ChEBI" id="CHEBI:29105"/>
        <note>catalytic</note>
    </ligand>
</feature>
<feature type="binding site" evidence="1">
    <location>
        <position position="14"/>
    </location>
    <ligand>
        <name>substrate</name>
    </ligand>
</feature>
<feature type="binding site" evidence="1">
    <location>
        <position position="14"/>
    </location>
    <ligand>
        <name>Zn(2+)</name>
        <dbReference type="ChEBI" id="CHEBI:29105"/>
        <note>catalytic</note>
    </ligand>
</feature>
<feature type="binding site" evidence="1">
    <location>
        <position position="16"/>
    </location>
    <ligand>
        <name>substrate</name>
    </ligand>
</feature>
<feature type="binding site" evidence="1">
    <location>
        <position position="170"/>
    </location>
    <ligand>
        <name>substrate</name>
    </ligand>
</feature>
<feature type="binding site" evidence="1">
    <location>
        <position position="197"/>
    </location>
    <ligand>
        <name>Zn(2+)</name>
        <dbReference type="ChEBI" id="CHEBI:29105"/>
        <note>catalytic</note>
    </ligand>
</feature>
<feature type="binding site" evidence="1">
    <location>
        <position position="278"/>
    </location>
    <ligand>
        <name>Zn(2+)</name>
        <dbReference type="ChEBI" id="CHEBI:29105"/>
        <note>catalytic</note>
    </ligand>
</feature>
<feature type="binding site" evidence="1">
    <location>
        <position position="279"/>
    </location>
    <ligand>
        <name>substrate</name>
    </ligand>
</feature>
<feature type="site" description="Important for catalytic activity" evidence="1">
    <location>
        <position position="221"/>
    </location>
</feature>